<proteinExistence type="inferred from homology"/>
<comment type="similarity">
    <text evidence="1">Belongs to the universal ribosomal protein uS2 family.</text>
</comment>
<dbReference type="EMBL" id="CP000518">
    <property type="protein sequence ID" value="ABL91238.1"/>
    <property type="molecule type" value="Genomic_DNA"/>
</dbReference>
<dbReference type="SMR" id="A1UEI0"/>
<dbReference type="STRING" id="189918.Mkms_2039"/>
<dbReference type="KEGG" id="mkm:Mkms_2039"/>
<dbReference type="HOGENOM" id="CLU_040318_2_3_11"/>
<dbReference type="OrthoDB" id="9808036at2"/>
<dbReference type="GO" id="GO:0022627">
    <property type="term" value="C:cytosolic small ribosomal subunit"/>
    <property type="evidence" value="ECO:0007669"/>
    <property type="project" value="TreeGrafter"/>
</dbReference>
<dbReference type="GO" id="GO:0003735">
    <property type="term" value="F:structural constituent of ribosome"/>
    <property type="evidence" value="ECO:0007669"/>
    <property type="project" value="InterPro"/>
</dbReference>
<dbReference type="GO" id="GO:0006412">
    <property type="term" value="P:translation"/>
    <property type="evidence" value="ECO:0007669"/>
    <property type="project" value="UniProtKB-UniRule"/>
</dbReference>
<dbReference type="CDD" id="cd01425">
    <property type="entry name" value="RPS2"/>
    <property type="match status" value="1"/>
</dbReference>
<dbReference type="FunFam" id="1.10.287.610:FF:000001">
    <property type="entry name" value="30S ribosomal protein S2"/>
    <property type="match status" value="1"/>
</dbReference>
<dbReference type="Gene3D" id="3.40.50.10490">
    <property type="entry name" value="Glucose-6-phosphate isomerase like protein, domain 1"/>
    <property type="match status" value="1"/>
</dbReference>
<dbReference type="Gene3D" id="1.10.287.610">
    <property type="entry name" value="Helix hairpin bin"/>
    <property type="match status" value="1"/>
</dbReference>
<dbReference type="HAMAP" id="MF_00291_B">
    <property type="entry name" value="Ribosomal_uS2_B"/>
    <property type="match status" value="1"/>
</dbReference>
<dbReference type="InterPro" id="IPR001865">
    <property type="entry name" value="Ribosomal_uS2"/>
</dbReference>
<dbReference type="InterPro" id="IPR005706">
    <property type="entry name" value="Ribosomal_uS2_bac/mit/plastid"/>
</dbReference>
<dbReference type="InterPro" id="IPR018130">
    <property type="entry name" value="Ribosomal_uS2_CS"/>
</dbReference>
<dbReference type="InterPro" id="IPR023591">
    <property type="entry name" value="Ribosomal_uS2_flav_dom_sf"/>
</dbReference>
<dbReference type="NCBIfam" id="TIGR01011">
    <property type="entry name" value="rpsB_bact"/>
    <property type="match status" value="1"/>
</dbReference>
<dbReference type="PANTHER" id="PTHR12534">
    <property type="entry name" value="30S RIBOSOMAL PROTEIN S2 PROKARYOTIC AND ORGANELLAR"/>
    <property type="match status" value="1"/>
</dbReference>
<dbReference type="PANTHER" id="PTHR12534:SF0">
    <property type="entry name" value="SMALL RIBOSOMAL SUBUNIT PROTEIN US2M"/>
    <property type="match status" value="1"/>
</dbReference>
<dbReference type="Pfam" id="PF00318">
    <property type="entry name" value="Ribosomal_S2"/>
    <property type="match status" value="1"/>
</dbReference>
<dbReference type="PRINTS" id="PR00395">
    <property type="entry name" value="RIBOSOMALS2"/>
</dbReference>
<dbReference type="SUPFAM" id="SSF52313">
    <property type="entry name" value="Ribosomal protein S2"/>
    <property type="match status" value="1"/>
</dbReference>
<dbReference type="PROSITE" id="PS00962">
    <property type="entry name" value="RIBOSOMAL_S2_1"/>
    <property type="match status" value="1"/>
</dbReference>
<accession>A1UEI0</accession>
<organism>
    <name type="scientific">Mycobacterium sp. (strain KMS)</name>
    <dbReference type="NCBI Taxonomy" id="189918"/>
    <lineage>
        <taxon>Bacteria</taxon>
        <taxon>Bacillati</taxon>
        <taxon>Actinomycetota</taxon>
        <taxon>Actinomycetes</taxon>
        <taxon>Mycobacteriales</taxon>
        <taxon>Mycobacteriaceae</taxon>
        <taxon>Mycobacterium</taxon>
    </lineage>
</organism>
<name>RS2_MYCSK</name>
<feature type="chain" id="PRO_1000004001" description="Small ribosomal subunit protein uS2">
    <location>
        <begin position="1"/>
        <end position="284"/>
    </location>
</feature>
<feature type="region of interest" description="Disordered" evidence="2">
    <location>
        <begin position="250"/>
        <end position="284"/>
    </location>
</feature>
<feature type="compositionally biased region" description="Low complexity" evidence="2">
    <location>
        <begin position="250"/>
        <end position="272"/>
    </location>
</feature>
<sequence>MAVVTMKQLLDSGTHFGHQTRRWNPKMKRFIFTDRNGIYIIDLQQTLTYIDKAYEFVKETVAHGGSIMFVGTKKQAQESIAEEATRVGMPYVNQRWLGGMLTNFSTVHKRLQRLKELEAMEQTGGFEGRTKKEILMLTREKNKLERSLGGIRDMQKVPSAIWVVDTNKEHLAVAEARKLNIPIIAILDTNCDPDVVDYPIPGNDDAIRSAALLTKVVASAVAEGLQARAGGGNGNKPEAEAAEPLAEWEQELLAGATASPTAAGAAPGTPEADIQTEPTAPQNP</sequence>
<evidence type="ECO:0000255" key="1">
    <source>
        <dbReference type="HAMAP-Rule" id="MF_00291"/>
    </source>
</evidence>
<evidence type="ECO:0000256" key="2">
    <source>
        <dbReference type="SAM" id="MobiDB-lite"/>
    </source>
</evidence>
<evidence type="ECO:0000305" key="3"/>
<gene>
    <name evidence="1" type="primary">rpsB</name>
    <name type="ordered locus">Mkms_2039</name>
</gene>
<reference key="1">
    <citation type="submission" date="2006-12" db="EMBL/GenBank/DDBJ databases">
        <title>Complete sequence of chromosome of Mycobacterium sp. KMS.</title>
        <authorList>
            <consortium name="US DOE Joint Genome Institute"/>
            <person name="Copeland A."/>
            <person name="Lucas S."/>
            <person name="Lapidus A."/>
            <person name="Barry K."/>
            <person name="Detter J.C."/>
            <person name="Glavina del Rio T."/>
            <person name="Hammon N."/>
            <person name="Israni S."/>
            <person name="Dalin E."/>
            <person name="Tice H."/>
            <person name="Pitluck S."/>
            <person name="Kiss H."/>
            <person name="Brettin T."/>
            <person name="Bruce D."/>
            <person name="Han C."/>
            <person name="Tapia R."/>
            <person name="Gilna P."/>
            <person name="Schmutz J."/>
            <person name="Larimer F."/>
            <person name="Land M."/>
            <person name="Hauser L."/>
            <person name="Kyrpides N."/>
            <person name="Mikhailova N."/>
            <person name="Miller C.D."/>
            <person name="Richardson P."/>
        </authorList>
    </citation>
    <scope>NUCLEOTIDE SEQUENCE [LARGE SCALE GENOMIC DNA]</scope>
    <source>
        <strain>KMS</strain>
    </source>
</reference>
<protein>
    <recommendedName>
        <fullName evidence="1">Small ribosomal subunit protein uS2</fullName>
    </recommendedName>
    <alternativeName>
        <fullName evidence="3">30S ribosomal protein S2</fullName>
    </alternativeName>
</protein>
<keyword id="KW-0687">Ribonucleoprotein</keyword>
<keyword id="KW-0689">Ribosomal protein</keyword>